<protein>
    <recommendedName>
        <fullName evidence="1">Sec-independent protein translocase protein TatA</fullName>
    </recommendedName>
</protein>
<proteinExistence type="inferred from homology"/>
<organism>
    <name type="scientific">Rickettsia africae (strain ESF-5)</name>
    <dbReference type="NCBI Taxonomy" id="347255"/>
    <lineage>
        <taxon>Bacteria</taxon>
        <taxon>Pseudomonadati</taxon>
        <taxon>Pseudomonadota</taxon>
        <taxon>Alphaproteobacteria</taxon>
        <taxon>Rickettsiales</taxon>
        <taxon>Rickettsiaceae</taxon>
        <taxon>Rickettsieae</taxon>
        <taxon>Rickettsia</taxon>
        <taxon>spotted fever group</taxon>
    </lineage>
</organism>
<keyword id="KW-0997">Cell inner membrane</keyword>
<keyword id="KW-1003">Cell membrane</keyword>
<keyword id="KW-0472">Membrane</keyword>
<keyword id="KW-0653">Protein transport</keyword>
<keyword id="KW-0811">Translocation</keyword>
<keyword id="KW-0812">Transmembrane</keyword>
<keyword id="KW-1133">Transmembrane helix</keyword>
<keyword id="KW-0813">Transport</keyword>
<dbReference type="EMBL" id="CP001612">
    <property type="protein sequence ID" value="ACP53866.1"/>
    <property type="molecule type" value="Genomic_DNA"/>
</dbReference>
<dbReference type="RefSeq" id="WP_012720003.1">
    <property type="nucleotide sequence ID" value="NC_012633.1"/>
</dbReference>
<dbReference type="SMR" id="C3PLM6"/>
<dbReference type="KEGG" id="raf:RAF_ORF1055"/>
<dbReference type="HOGENOM" id="CLU_086034_6_2_5"/>
<dbReference type="Proteomes" id="UP000002305">
    <property type="component" value="Chromosome"/>
</dbReference>
<dbReference type="GO" id="GO:0033281">
    <property type="term" value="C:TAT protein transport complex"/>
    <property type="evidence" value="ECO:0007669"/>
    <property type="project" value="UniProtKB-UniRule"/>
</dbReference>
<dbReference type="GO" id="GO:0008320">
    <property type="term" value="F:protein transmembrane transporter activity"/>
    <property type="evidence" value="ECO:0007669"/>
    <property type="project" value="UniProtKB-UniRule"/>
</dbReference>
<dbReference type="GO" id="GO:0043953">
    <property type="term" value="P:protein transport by the Tat complex"/>
    <property type="evidence" value="ECO:0007669"/>
    <property type="project" value="UniProtKB-UniRule"/>
</dbReference>
<dbReference type="Gene3D" id="1.20.5.3310">
    <property type="match status" value="1"/>
</dbReference>
<dbReference type="HAMAP" id="MF_00236">
    <property type="entry name" value="TatA_E"/>
    <property type="match status" value="1"/>
</dbReference>
<dbReference type="InterPro" id="IPR003369">
    <property type="entry name" value="TatA/B/E"/>
</dbReference>
<dbReference type="InterPro" id="IPR006312">
    <property type="entry name" value="TatA/E"/>
</dbReference>
<dbReference type="NCBIfam" id="NF002402">
    <property type="entry name" value="PRK01470.1"/>
    <property type="match status" value="1"/>
</dbReference>
<dbReference type="NCBIfam" id="TIGR01411">
    <property type="entry name" value="tatAE"/>
    <property type="match status" value="1"/>
</dbReference>
<dbReference type="PANTHER" id="PTHR42982">
    <property type="entry name" value="SEC-INDEPENDENT PROTEIN TRANSLOCASE PROTEIN TATA"/>
    <property type="match status" value="1"/>
</dbReference>
<dbReference type="PANTHER" id="PTHR42982:SF1">
    <property type="entry name" value="SEC-INDEPENDENT PROTEIN TRANSLOCASE PROTEIN TATA"/>
    <property type="match status" value="1"/>
</dbReference>
<dbReference type="Pfam" id="PF02416">
    <property type="entry name" value="TatA_B_E"/>
    <property type="match status" value="1"/>
</dbReference>
<gene>
    <name evidence="1" type="primary">tatA</name>
    <name type="ordered locus">RAF_ORF1055</name>
</gene>
<comment type="function">
    <text evidence="1">Part of the twin-arginine translocation (Tat) system that transports large folded proteins containing a characteristic twin-arginine motif in their signal peptide across membranes. TatA could form the protein-conducting channel of the Tat system.</text>
</comment>
<comment type="subunit">
    <text evidence="1">The Tat system comprises two distinct complexes: a TatABC complex, containing multiple copies of TatA, TatB and TatC subunits, and a separate TatA complex, containing only TatA subunits. Substrates initially bind to the TatABC complex, which probably triggers association of the separate TatA complex to form the active translocon.</text>
</comment>
<comment type="subcellular location">
    <subcellularLocation>
        <location evidence="1">Cell inner membrane</location>
        <topology evidence="1">Single-pass membrane protein</topology>
    </subcellularLocation>
</comment>
<comment type="similarity">
    <text evidence="1">Belongs to the TatA/E family.</text>
</comment>
<reference key="1">
    <citation type="journal article" date="2009" name="BMC Genomics">
        <title>Analysis of the Rickettsia africae genome reveals that virulence acquisition in Rickettsia species may be explained by genome reduction.</title>
        <authorList>
            <person name="Fournier P.-E."/>
            <person name="El Karkouri K."/>
            <person name="Leroy Q."/>
            <person name="Robert C."/>
            <person name="Giumelli B."/>
            <person name="Renesto P."/>
            <person name="Socolovschi C."/>
            <person name="Parola P."/>
            <person name="Audic S."/>
            <person name="Raoult D."/>
        </authorList>
    </citation>
    <scope>NUCLEOTIDE SEQUENCE [LARGE SCALE GENOMIC DNA]</scope>
    <source>
        <strain>ESF-5</strain>
    </source>
</reference>
<name>TATA_RICAE</name>
<feature type="chain" id="PRO_1000204442" description="Sec-independent protein translocase protein TatA">
    <location>
        <begin position="1"/>
        <end position="53"/>
    </location>
</feature>
<feature type="transmembrane region" description="Helical" evidence="1">
    <location>
        <begin position="1"/>
        <end position="21"/>
    </location>
</feature>
<accession>C3PLM6</accession>
<sequence>MGMSFSHLLIVLLIIFVLFGAGKLPQVMSDLAKGLKAFKDGLKDDGSDNDKNK</sequence>
<evidence type="ECO:0000255" key="1">
    <source>
        <dbReference type="HAMAP-Rule" id="MF_00236"/>
    </source>
</evidence>